<keyword id="KW-0009">Actin-binding</keyword>
<keyword id="KW-0067">ATP-binding</keyword>
<keyword id="KW-0112">Calmodulin-binding</keyword>
<keyword id="KW-0966">Cell projection</keyword>
<keyword id="KW-0963">Cytoplasm</keyword>
<keyword id="KW-0217">Developmental protein</keyword>
<keyword id="KW-0967">Endosome</keyword>
<keyword id="KW-0505">Motor protein</keyword>
<keyword id="KW-0518">Myosin</keyword>
<keyword id="KW-0547">Nucleotide-binding</keyword>
<keyword id="KW-0653">Protein transport</keyword>
<keyword id="KW-1185">Reference proteome</keyword>
<keyword id="KW-0677">Repeat</keyword>
<keyword id="KW-0813">Transport</keyword>
<feature type="chain" id="PRO_0000446322" description="Unconventional myosin-Id">
    <location>
        <begin position="1"/>
        <end position="1004"/>
    </location>
</feature>
<feature type="domain" description="Myosin motor" evidence="4">
    <location>
        <begin position="9"/>
        <end position="695"/>
    </location>
</feature>
<feature type="domain" description="IQ 1" evidence="3">
    <location>
        <begin position="699"/>
        <end position="719"/>
    </location>
</feature>
<feature type="domain" description="IQ 2" evidence="3">
    <location>
        <begin position="721"/>
        <end position="741"/>
    </location>
</feature>
<feature type="domain" description="TH1" evidence="5">
    <location>
        <begin position="812"/>
        <end position="1003"/>
    </location>
</feature>
<feature type="region of interest" description="Actin-binding" evidence="4">
    <location>
        <begin position="572"/>
        <end position="594"/>
    </location>
</feature>
<feature type="binding site" evidence="4">
    <location>
        <begin position="102"/>
        <end position="109"/>
    </location>
    <ligand>
        <name>ATP</name>
        <dbReference type="ChEBI" id="CHEBI:30616"/>
    </ligand>
</feature>
<proteinExistence type="evidence at transcript level"/>
<accession>E7F9L8</accession>
<gene>
    <name type="primary">myo1d</name>
    <name type="ORF">si:ch211-94l19.4</name>
</gene>
<sequence length="1004" mass="115885">MAEHESLEFGKADFVLLDNVSLEEFMANLKLRFEKGRIYSYIGEVVVSVNPYRAMNIYGRDVIEQYKGRELYERPPHLFAIADAAYKAMKRRNKDTCIVISGESGAGKTEASKYIMQYIAAITNPSQRAEVERVKNMLLKSNCVLEAFGNAKTNRNDNSSRFGKYMDINFDFKGDPIGGHINNYLLEKSRVIFQQEGERSFHSFYQLVKGAPDAQLRSLHIQRDPTAYNYIKVGGQLKSSINDSAEFKAVADAMKVIGFTTEEIQTVYKILATILHLGNLKFGTDGDVTLIENSKLVSVLGDLLSTKEENVEKAMLYRTVATGRDVIDKQHTHQEASYGRDALAKAIYERLFCWIVGRINDIIEVKNYDARVHGKNTVIGVLDIYGFEIFQNNSFEQFCINYCNEKLQQLFIQLVLKQEQEEYQREGIPWKHIDYFNNQIIVDLVEQQHKGIFAVLDEACMNVGKVTDEMFLQALNGKLAKHAHYTSRKLSPTDKNLEFERDFRIRHYAGDVTYSVVGFIDKNKDTLFQDFKRLLYNSSNPVLKAMWPEGKLSITEVTKRPLTAATLFKNSMISLVEKLASKEPYYVRCIKPNDVKSPLLFEHERCKHQVEYLGLLENVRVRRAGFANRQTYPRFLQRYKMISEFTWPNHDLSSDKEAVKRLLQGCGFEHDVAYGKTKVFIRTPRTIFSLEEQRAEMVKRIVLFLQKVWRGTLARMRYRRMRAALIIIRAYRRYKVKSYIREVIRRFKNVRDMKDHGKHVKWPTPPKVLRKFEEALRSIYNRWWAWTLIKPLSPEKTVQIRAKVATLECLKGQRADLGLQRAWEGNYLKKDSPGTASSFTLVSSDLQRKDKFMRVLFSSNVRKINRFNKAEDRALLITDRHLYKMDPLKQYKPMKSIPLYNVTGVSISPGKDQLVVFHTKDNRDLIVCLQGMVPAGDSRIGELVGTLLSHFKSEKRKLQVNTVSPIHCSMNGRKCTVVVETKISQSQPDFTKSRSGYILSVPGN</sequence>
<comment type="function">
    <text evidence="1 2 6 7">Unconventional myosin that functions as actin-based motor protein with ATPase activity (By similarity). Plays a role in the formation of Kupffer's vesicle, an organ that functions as a left-right organizer during embryogenesis (PubMed:29769531, PubMed:30139971). Plays a role in vesicular trafficking events that are required for normal lumen expansion of Kupffer's vesicle (PubMed:30139971). Required for normal orientation of cilia in Kupffer's vesicle, and thus for normal, unidirectional circular flow and normal angular flow velocity, which then mediates asymmetric gene expression and left-right asymmetric development (PubMed:29769531). Plays a role in endosomal protein trafficking, and especially in the transfer of cargo proteins from early to recycling endosomes (By similarity). Required for normal planar cell polarity in ciliated cells, for normal rotational polarity of cilia, and for coordinated, unidirectional ciliary movement (By similarity).</text>
</comment>
<comment type="subunit">
    <text evidence="2">Interacts (via the two IQ motifs) with calmodulin. Interacts with F-actin.</text>
</comment>
<comment type="subcellular location">
    <subcellularLocation>
        <location evidence="2">Cytoplasm</location>
    </subcellularLocation>
    <subcellularLocation>
        <location evidence="2">Perikaryon</location>
    </subcellularLocation>
    <subcellularLocation>
        <location evidence="2">Cell projection</location>
        <location evidence="2">Dendrite</location>
    </subcellularLocation>
    <subcellularLocation>
        <location evidence="1">Early endosome</location>
    </subcellularLocation>
    <subcellularLocation>
        <location evidence="2">Cytoplasm</location>
        <location evidence="2">Cell cortex</location>
    </subcellularLocation>
    <text evidence="2">Colocalizes with the actin cytoskeleton in the cell cortex close to the apical cell membrane. Colocalizes with cytoplasmic puncta that are reminiscent of transport vesicles.</text>
</comment>
<comment type="developmental stage">
    <text evidence="6 7">Expressed both maternally and zygotically (PubMed:29769531). Ubiquitous in embryos at the four cell stage (PubMed:30139971). Detected at the eight cell stage. Detected at low levels throughout the embryo at the six somite stage, with higher levels in the developing notochord (PubMed:29769531).</text>
</comment>
<comment type="domain">
    <text evidence="2">Binds a calmodulin chain via each of the two IQ domains. IQ domain 1 mediates interaction with calmodulin both in the presence and in the absence of Ca(2+). IQ domain 2 mediates interaction with calmodulin in the presence of Ca(2+).</text>
</comment>
<comment type="domain">
    <text evidence="2">The TH1 domain is required for activity in complementing zebrafish defects in Kupffer's vesicle lumen size.</text>
</comment>
<comment type="disruption phenotype">
    <text evidence="6 7">Morpholino knockdown of the protein causes situs inversus, a left-right asymmetry defect where organs are placed at a position corresponding to the mirror image of the normal body plan. Causes laterality defects at the level of the heart, viscera and brain (PubMed:29769531). Morpholino knockdown of the protein leads to the formation of a Kupffer's vesicle with reduced volume and dismorphic shape. Morpholino knockdown of the protein interferes with the normal cellular remodeling that gives rise to anterior-posterior asymmetry of Kupffer's vesicle. Cells with a columnar shape persist at the posterior end of the vesicle, contrary to wild-type, where cells display columnar shape at the anterior part of the vesicle, and squamous or cuboidal shape at the posterior end of Kupffer's vesicle. Epithelial cells lining Kupffer's vesicle display an increased number of vacuoles, and disruption of the normal, directed vacuolar trafficking toward the apical cell membrane (PubMed:30139971).</text>
</comment>
<comment type="miscellaneous">
    <text evidence="6 7">Agents that activate cftr increase the size of Kupffer's vesicle in myo1d mutants (PubMed:29769531, PubMed:30139971). Expansion of the lumen size is not sufficient to restore the normal spherical shape of Kupffer's vesicle and rescue laterality defects (PubMed:29769531, PubMed:30139971). Heterologous expression of rat Myo1d can complement the defects in Kupffer's vesicle lumen size and anterior-posterior cell shape changes (PubMed:30139971).</text>
</comment>
<comment type="similarity">
    <text evidence="4">Belongs to the TRAFAC class myosin-kinesin ATPase superfamily. Myosin family.</text>
</comment>
<comment type="caution">
    <text evidence="10">Represents an unconventional myosin that should not be confused with the conventional myosin-1.</text>
</comment>
<comment type="online information" name="Protein Spotlight">
    <link uri="https://www.proteinspotlight.org/back_issues/213/"/>
    <text>Another kind of harmony - Issue 213 of April 2019</text>
</comment>
<organism evidence="11">
    <name type="scientific">Danio rerio</name>
    <name type="common">Zebrafish</name>
    <name type="synonym">Brachydanio rerio</name>
    <dbReference type="NCBI Taxonomy" id="7955"/>
    <lineage>
        <taxon>Eukaryota</taxon>
        <taxon>Metazoa</taxon>
        <taxon>Chordata</taxon>
        <taxon>Craniata</taxon>
        <taxon>Vertebrata</taxon>
        <taxon>Euteleostomi</taxon>
        <taxon>Actinopterygii</taxon>
        <taxon>Neopterygii</taxon>
        <taxon>Teleostei</taxon>
        <taxon>Ostariophysi</taxon>
        <taxon>Cypriniformes</taxon>
        <taxon>Danionidae</taxon>
        <taxon>Danioninae</taxon>
        <taxon>Danio</taxon>
    </lineage>
</organism>
<dbReference type="EMBL" id="CR391936">
    <property type="status" value="NOT_ANNOTATED_CDS"/>
    <property type="molecule type" value="Genomic_DNA"/>
</dbReference>
<dbReference type="EMBL" id="CT033798">
    <property type="status" value="NOT_ANNOTATED_CDS"/>
    <property type="molecule type" value="Genomic_DNA"/>
</dbReference>
<dbReference type="EMBL" id="CT033800">
    <property type="status" value="NOT_ANNOTATED_CDS"/>
    <property type="molecule type" value="Genomic_DNA"/>
</dbReference>
<dbReference type="RefSeq" id="NP_001410893.1">
    <property type="nucleotide sequence ID" value="NM_001423964.1"/>
</dbReference>
<dbReference type="RefSeq" id="XP_688008.5">
    <property type="nucleotide sequence ID" value="XM_682916.7"/>
</dbReference>
<dbReference type="SMR" id="E7F9L8"/>
<dbReference type="FunCoup" id="E7F9L8">
    <property type="interactions" value="672"/>
</dbReference>
<dbReference type="STRING" id="7955.ENSDARP00000067761"/>
<dbReference type="PaxDb" id="7955-ENSDARP00000067761"/>
<dbReference type="PeptideAtlas" id="E7F9L8"/>
<dbReference type="Ensembl" id="ENSDART00000067762">
    <property type="protein sequence ID" value="ENSDARP00000067761"/>
    <property type="gene ID" value="ENSDARG00000036863"/>
</dbReference>
<dbReference type="GeneID" id="559562"/>
<dbReference type="AGR" id="ZFIN:ZDB-GENE-130531-15"/>
<dbReference type="ZFIN" id="ZDB-GENE-130531-15">
    <property type="gene designation" value="myo1d"/>
</dbReference>
<dbReference type="eggNOG" id="KOG0164">
    <property type="taxonomic scope" value="Eukaryota"/>
</dbReference>
<dbReference type="HOGENOM" id="CLU_000192_7_7_1"/>
<dbReference type="InParanoid" id="E7F9L8"/>
<dbReference type="OMA" id="SSCIEIF"/>
<dbReference type="OrthoDB" id="6108017at2759"/>
<dbReference type="PhylomeDB" id="E7F9L8"/>
<dbReference type="TreeFam" id="TF312960"/>
<dbReference type="PRO" id="PR:E7F9L8"/>
<dbReference type="Proteomes" id="UP000000437">
    <property type="component" value="Chromosome 12"/>
</dbReference>
<dbReference type="Bgee" id="ENSDARG00000036863">
    <property type="expression patterns" value="Expressed in swim bladder and 26 other cell types or tissues"/>
</dbReference>
<dbReference type="GO" id="GO:0015629">
    <property type="term" value="C:actin cytoskeleton"/>
    <property type="evidence" value="ECO:0000318"/>
    <property type="project" value="GO_Central"/>
</dbReference>
<dbReference type="GO" id="GO:0005938">
    <property type="term" value="C:cell cortex"/>
    <property type="evidence" value="ECO:0007669"/>
    <property type="project" value="UniProtKB-SubCell"/>
</dbReference>
<dbReference type="GO" id="GO:0005737">
    <property type="term" value="C:cytoplasm"/>
    <property type="evidence" value="ECO:0000318"/>
    <property type="project" value="GO_Central"/>
</dbReference>
<dbReference type="GO" id="GO:0030425">
    <property type="term" value="C:dendrite"/>
    <property type="evidence" value="ECO:0007669"/>
    <property type="project" value="UniProtKB-SubCell"/>
</dbReference>
<dbReference type="GO" id="GO:0005769">
    <property type="term" value="C:early endosome"/>
    <property type="evidence" value="ECO:0007669"/>
    <property type="project" value="UniProtKB-SubCell"/>
</dbReference>
<dbReference type="GO" id="GO:0005576">
    <property type="term" value="C:extracellular region"/>
    <property type="evidence" value="ECO:0007669"/>
    <property type="project" value="GOC"/>
</dbReference>
<dbReference type="GO" id="GO:0005902">
    <property type="term" value="C:microvillus"/>
    <property type="evidence" value="ECO:0000318"/>
    <property type="project" value="GO_Central"/>
</dbReference>
<dbReference type="GO" id="GO:0016459">
    <property type="term" value="C:myosin complex"/>
    <property type="evidence" value="ECO:0007669"/>
    <property type="project" value="UniProtKB-KW"/>
</dbReference>
<dbReference type="GO" id="GO:0043204">
    <property type="term" value="C:perikaryon"/>
    <property type="evidence" value="ECO:0007669"/>
    <property type="project" value="UniProtKB-SubCell"/>
</dbReference>
<dbReference type="GO" id="GO:0005886">
    <property type="term" value="C:plasma membrane"/>
    <property type="evidence" value="ECO:0000318"/>
    <property type="project" value="GO_Central"/>
</dbReference>
<dbReference type="GO" id="GO:0051015">
    <property type="term" value="F:actin filament binding"/>
    <property type="evidence" value="ECO:0000318"/>
    <property type="project" value="GO_Central"/>
</dbReference>
<dbReference type="GO" id="GO:0005524">
    <property type="term" value="F:ATP binding"/>
    <property type="evidence" value="ECO:0007669"/>
    <property type="project" value="UniProtKB-KW"/>
</dbReference>
<dbReference type="GO" id="GO:0005516">
    <property type="term" value="F:calmodulin binding"/>
    <property type="evidence" value="ECO:0007669"/>
    <property type="project" value="UniProtKB-KW"/>
</dbReference>
<dbReference type="GO" id="GO:0000146">
    <property type="term" value="F:microfilament motor activity"/>
    <property type="evidence" value="ECO:0000318"/>
    <property type="project" value="GO_Central"/>
</dbReference>
<dbReference type="GO" id="GO:0007015">
    <property type="term" value="P:actin filament organization"/>
    <property type="evidence" value="ECO:0000318"/>
    <property type="project" value="GO_Central"/>
</dbReference>
<dbReference type="GO" id="GO:0030048">
    <property type="term" value="P:actin filament-based movement"/>
    <property type="evidence" value="ECO:0000318"/>
    <property type="project" value="GO_Central"/>
</dbReference>
<dbReference type="GO" id="GO:0071910">
    <property type="term" value="P:determination of liver left/right asymmetry"/>
    <property type="evidence" value="ECO:0000315"/>
    <property type="project" value="UniProtKB"/>
</dbReference>
<dbReference type="GO" id="GO:0035469">
    <property type="term" value="P:determination of pancreatic left/right asymmetry"/>
    <property type="evidence" value="ECO:0000315"/>
    <property type="project" value="UniProtKB"/>
</dbReference>
<dbReference type="GO" id="GO:0006897">
    <property type="term" value="P:endocytosis"/>
    <property type="evidence" value="ECO:0000318"/>
    <property type="project" value="GO_Central"/>
</dbReference>
<dbReference type="GO" id="GO:0060287">
    <property type="term" value="P:epithelial cilium movement involved in determination of left/right asymmetry"/>
    <property type="evidence" value="ECO:0000315"/>
    <property type="project" value="UniProtKB"/>
</dbReference>
<dbReference type="GO" id="GO:0061966">
    <property type="term" value="P:establishment of left/right asymmetry"/>
    <property type="evidence" value="ECO:0000315"/>
    <property type="project" value="UniProtKB"/>
</dbReference>
<dbReference type="GO" id="GO:0003146">
    <property type="term" value="P:heart jogging"/>
    <property type="evidence" value="ECO:0000315"/>
    <property type="project" value="UniProtKB"/>
</dbReference>
<dbReference type="GO" id="GO:0070121">
    <property type="term" value="P:Kupffer's vesicle development"/>
    <property type="evidence" value="ECO:0000315"/>
    <property type="project" value="ZFIN"/>
</dbReference>
<dbReference type="GO" id="GO:0015031">
    <property type="term" value="P:protein transport"/>
    <property type="evidence" value="ECO:0007669"/>
    <property type="project" value="UniProtKB-KW"/>
</dbReference>
<dbReference type="CDD" id="cd01378">
    <property type="entry name" value="MYSc_Myo1"/>
    <property type="match status" value="1"/>
</dbReference>
<dbReference type="FunFam" id="1.20.5.4820:FF:000003">
    <property type="entry name" value="Unconventional myosin ID"/>
    <property type="match status" value="1"/>
</dbReference>
<dbReference type="FunFam" id="1.20.58.530:FF:000004">
    <property type="entry name" value="Unconventional myosin ID"/>
    <property type="match status" value="1"/>
</dbReference>
<dbReference type="FunFam" id="1.20.120.720:FF:000009">
    <property type="entry name" value="Unconventional myosin-Id"/>
    <property type="match status" value="1"/>
</dbReference>
<dbReference type="FunFam" id="1.10.10.820:FF:000007">
    <property type="entry name" value="unconventional myosin-Id"/>
    <property type="match status" value="1"/>
</dbReference>
<dbReference type="Gene3D" id="1.10.10.820">
    <property type="match status" value="1"/>
</dbReference>
<dbReference type="Gene3D" id="1.20.5.4820">
    <property type="match status" value="1"/>
</dbReference>
<dbReference type="Gene3D" id="1.20.58.530">
    <property type="match status" value="1"/>
</dbReference>
<dbReference type="Gene3D" id="3.40.850.10">
    <property type="entry name" value="Kinesin motor domain"/>
    <property type="match status" value="1"/>
</dbReference>
<dbReference type="Gene3D" id="1.20.120.720">
    <property type="entry name" value="Myosin VI head, motor domain, U50 subdomain"/>
    <property type="match status" value="1"/>
</dbReference>
<dbReference type="InterPro" id="IPR000048">
    <property type="entry name" value="IQ_motif_EF-hand-BS"/>
</dbReference>
<dbReference type="InterPro" id="IPR036961">
    <property type="entry name" value="Kinesin_motor_dom_sf"/>
</dbReference>
<dbReference type="InterPro" id="IPR001609">
    <property type="entry name" value="Myosin_head_motor_dom-like"/>
</dbReference>
<dbReference type="InterPro" id="IPR010926">
    <property type="entry name" value="Myosin_TH1"/>
</dbReference>
<dbReference type="InterPro" id="IPR036072">
    <property type="entry name" value="MYSc_Myo1"/>
</dbReference>
<dbReference type="InterPro" id="IPR027417">
    <property type="entry name" value="P-loop_NTPase"/>
</dbReference>
<dbReference type="PANTHER" id="PTHR13140">
    <property type="entry name" value="MYOSIN"/>
    <property type="match status" value="1"/>
</dbReference>
<dbReference type="PANTHER" id="PTHR13140:SF417">
    <property type="entry name" value="UNCONVENTIONAL MYOSIN-ID"/>
    <property type="match status" value="1"/>
</dbReference>
<dbReference type="Pfam" id="PF00063">
    <property type="entry name" value="Myosin_head"/>
    <property type="match status" value="1"/>
</dbReference>
<dbReference type="Pfam" id="PF06017">
    <property type="entry name" value="Myosin_TH1"/>
    <property type="match status" value="1"/>
</dbReference>
<dbReference type="PRINTS" id="PR00193">
    <property type="entry name" value="MYOSINHEAVY"/>
</dbReference>
<dbReference type="SMART" id="SM00015">
    <property type="entry name" value="IQ"/>
    <property type="match status" value="1"/>
</dbReference>
<dbReference type="SMART" id="SM00242">
    <property type="entry name" value="MYSc"/>
    <property type="match status" value="1"/>
</dbReference>
<dbReference type="SUPFAM" id="SSF52540">
    <property type="entry name" value="P-loop containing nucleoside triphosphate hydrolases"/>
    <property type="match status" value="1"/>
</dbReference>
<dbReference type="PROSITE" id="PS50096">
    <property type="entry name" value="IQ"/>
    <property type="match status" value="1"/>
</dbReference>
<dbReference type="PROSITE" id="PS51456">
    <property type="entry name" value="MYOSIN_MOTOR"/>
    <property type="match status" value="1"/>
</dbReference>
<dbReference type="PROSITE" id="PS51757">
    <property type="entry name" value="TH1"/>
    <property type="match status" value="1"/>
</dbReference>
<protein>
    <recommendedName>
        <fullName>Unconventional myosin-Id</fullName>
    </recommendedName>
    <alternativeName>
        <fullName evidence="9">Myosin 1d</fullName>
    </alternativeName>
    <alternativeName>
        <fullName evidence="8">Myosin1D</fullName>
    </alternativeName>
</protein>
<name>MYO1D_DANRE</name>
<evidence type="ECO:0000250" key="1">
    <source>
        <dbReference type="UniProtKB" id="F1PRN2"/>
    </source>
</evidence>
<evidence type="ECO:0000250" key="2">
    <source>
        <dbReference type="UniProtKB" id="Q63357"/>
    </source>
</evidence>
<evidence type="ECO:0000255" key="3">
    <source>
        <dbReference type="PROSITE-ProRule" id="PRU00116"/>
    </source>
</evidence>
<evidence type="ECO:0000255" key="4">
    <source>
        <dbReference type="PROSITE-ProRule" id="PRU00782"/>
    </source>
</evidence>
<evidence type="ECO:0000255" key="5">
    <source>
        <dbReference type="PROSITE-ProRule" id="PRU01093"/>
    </source>
</evidence>
<evidence type="ECO:0000269" key="6">
    <source>
    </source>
</evidence>
<evidence type="ECO:0000269" key="7">
    <source>
    </source>
</evidence>
<evidence type="ECO:0000303" key="8">
    <source>
    </source>
</evidence>
<evidence type="ECO:0000303" key="9">
    <source>
    </source>
</evidence>
<evidence type="ECO:0000305" key="10"/>
<evidence type="ECO:0000312" key="11">
    <source>
        <dbReference type="Proteomes" id="UP000000437"/>
    </source>
</evidence>
<reference key="1">
    <citation type="journal article" date="2013" name="Nature">
        <title>The zebrafish reference genome sequence and its relationship to the human genome.</title>
        <authorList>
            <person name="Howe K."/>
            <person name="Clark M.D."/>
            <person name="Torroja C.F."/>
            <person name="Torrance J."/>
            <person name="Berthelot C."/>
            <person name="Muffato M."/>
            <person name="Collins J.E."/>
            <person name="Humphray S."/>
            <person name="McLaren K."/>
            <person name="Matthews L."/>
            <person name="McLaren S."/>
            <person name="Sealy I."/>
            <person name="Caccamo M."/>
            <person name="Churcher C."/>
            <person name="Scott C."/>
            <person name="Barrett J.C."/>
            <person name="Koch R."/>
            <person name="Rauch G.J."/>
            <person name="White S."/>
            <person name="Chow W."/>
            <person name="Kilian B."/>
            <person name="Quintais L.T."/>
            <person name="Guerra-Assuncao J.A."/>
            <person name="Zhou Y."/>
            <person name="Gu Y."/>
            <person name="Yen J."/>
            <person name="Vogel J.H."/>
            <person name="Eyre T."/>
            <person name="Redmond S."/>
            <person name="Banerjee R."/>
            <person name="Chi J."/>
            <person name="Fu B."/>
            <person name="Langley E."/>
            <person name="Maguire S.F."/>
            <person name="Laird G.K."/>
            <person name="Lloyd D."/>
            <person name="Kenyon E."/>
            <person name="Donaldson S."/>
            <person name="Sehra H."/>
            <person name="Almeida-King J."/>
            <person name="Loveland J."/>
            <person name="Trevanion S."/>
            <person name="Jones M."/>
            <person name="Quail M."/>
            <person name="Willey D."/>
            <person name="Hunt A."/>
            <person name="Burton J."/>
            <person name="Sims S."/>
            <person name="McLay K."/>
            <person name="Plumb B."/>
            <person name="Davis J."/>
            <person name="Clee C."/>
            <person name="Oliver K."/>
            <person name="Clark R."/>
            <person name="Riddle C."/>
            <person name="Elliot D."/>
            <person name="Threadgold G."/>
            <person name="Harden G."/>
            <person name="Ware D."/>
            <person name="Begum S."/>
            <person name="Mortimore B."/>
            <person name="Kerry G."/>
            <person name="Heath P."/>
            <person name="Phillimore B."/>
            <person name="Tracey A."/>
            <person name="Corby N."/>
            <person name="Dunn M."/>
            <person name="Johnson C."/>
            <person name="Wood J."/>
            <person name="Clark S."/>
            <person name="Pelan S."/>
            <person name="Griffiths G."/>
            <person name="Smith M."/>
            <person name="Glithero R."/>
            <person name="Howden P."/>
            <person name="Barker N."/>
            <person name="Lloyd C."/>
            <person name="Stevens C."/>
            <person name="Harley J."/>
            <person name="Holt K."/>
            <person name="Panagiotidis G."/>
            <person name="Lovell J."/>
            <person name="Beasley H."/>
            <person name="Henderson C."/>
            <person name="Gordon D."/>
            <person name="Auger K."/>
            <person name="Wright D."/>
            <person name="Collins J."/>
            <person name="Raisen C."/>
            <person name="Dyer L."/>
            <person name="Leung K."/>
            <person name="Robertson L."/>
            <person name="Ambridge K."/>
            <person name="Leongamornlert D."/>
            <person name="McGuire S."/>
            <person name="Gilderthorp R."/>
            <person name="Griffiths C."/>
            <person name="Manthravadi D."/>
            <person name="Nichol S."/>
            <person name="Barker G."/>
            <person name="Whitehead S."/>
            <person name="Kay M."/>
            <person name="Brown J."/>
            <person name="Murnane C."/>
            <person name="Gray E."/>
            <person name="Humphries M."/>
            <person name="Sycamore N."/>
            <person name="Barker D."/>
            <person name="Saunders D."/>
            <person name="Wallis J."/>
            <person name="Babbage A."/>
            <person name="Hammond S."/>
            <person name="Mashreghi-Mohammadi M."/>
            <person name="Barr L."/>
            <person name="Martin S."/>
            <person name="Wray P."/>
            <person name="Ellington A."/>
            <person name="Matthews N."/>
            <person name="Ellwood M."/>
            <person name="Woodmansey R."/>
            <person name="Clark G."/>
            <person name="Cooper J."/>
            <person name="Tromans A."/>
            <person name="Grafham D."/>
            <person name="Skuce C."/>
            <person name="Pandian R."/>
            <person name="Andrews R."/>
            <person name="Harrison E."/>
            <person name="Kimberley A."/>
            <person name="Garnett J."/>
            <person name="Fosker N."/>
            <person name="Hall R."/>
            <person name="Garner P."/>
            <person name="Kelly D."/>
            <person name="Bird C."/>
            <person name="Palmer S."/>
            <person name="Gehring I."/>
            <person name="Berger A."/>
            <person name="Dooley C.M."/>
            <person name="Ersan-Urun Z."/>
            <person name="Eser C."/>
            <person name="Geiger H."/>
            <person name="Geisler M."/>
            <person name="Karotki L."/>
            <person name="Kirn A."/>
            <person name="Konantz J."/>
            <person name="Konantz M."/>
            <person name="Oberlander M."/>
            <person name="Rudolph-Geiger S."/>
            <person name="Teucke M."/>
            <person name="Lanz C."/>
            <person name="Raddatz G."/>
            <person name="Osoegawa K."/>
            <person name="Zhu B."/>
            <person name="Rapp A."/>
            <person name="Widaa S."/>
            <person name="Langford C."/>
            <person name="Yang F."/>
            <person name="Schuster S.C."/>
            <person name="Carter N.P."/>
            <person name="Harrow J."/>
            <person name="Ning Z."/>
            <person name="Herrero J."/>
            <person name="Searle S.M."/>
            <person name="Enright A."/>
            <person name="Geisler R."/>
            <person name="Plasterk R.H."/>
            <person name="Lee C."/>
            <person name="Westerfield M."/>
            <person name="de Jong P.J."/>
            <person name="Zon L.I."/>
            <person name="Postlethwait J.H."/>
            <person name="Nusslein-Volhard C."/>
            <person name="Hubbard T.J."/>
            <person name="Roest Crollius H."/>
            <person name="Rogers J."/>
            <person name="Stemple D.L."/>
        </authorList>
    </citation>
    <scope>NUCLEOTIDE SEQUENCE [LARGE SCALE GENOMIC DNA]</scope>
    <source>
        <strain>Tuebingen</strain>
    </source>
</reference>
<reference key="2">
    <citation type="journal article" date="2018" name="Nat. Commun.">
        <title>Myosin1D is an evolutionarily conserved regulator of animal left-right asymmetry.</title>
        <authorList>
            <person name="Juan T."/>
            <person name="Geminard C."/>
            <person name="Coutelis J.B."/>
            <person name="Cerezo D."/>
            <person name="Poles S."/>
            <person name="Noselli S."/>
            <person name="Fuerthauer M."/>
        </authorList>
    </citation>
    <scope>FUNCTION</scope>
    <scope>DISRUPTION PHENOTYPE</scope>
    <scope>DEVELOPMENTAL STAGE</scope>
</reference>
<reference key="3">
    <citation type="journal article" date="2018" name="Nat. Commun.">
        <title>Vertebrate myosin 1d regulates left-right organizer morphogenesis and laterality.</title>
        <authorList>
            <person name="Saydmohammed M."/>
            <person name="Yagi H."/>
            <person name="Calderon M."/>
            <person name="Clark M.J."/>
            <person name="Feinstein T."/>
            <person name="Sun M."/>
            <person name="Stolz D.B."/>
            <person name="Watkins S.C."/>
            <person name="Amack J.D."/>
            <person name="Lo C.W."/>
            <person name="Tsang M."/>
        </authorList>
    </citation>
    <scope>FUNCTION</scope>
    <scope>DISRUPTION PHENOTYPE</scope>
</reference>